<keyword id="KW-0479">Metal-binding</keyword>
<keyword id="KW-0520">NAD</keyword>
<keyword id="KW-0521">NADP</keyword>
<keyword id="KW-0558">Oxidation</keyword>
<keyword id="KW-0560">Oxidoreductase</keyword>
<keyword id="KW-0630">Potassium</keyword>
<accession>B7V5R4</accession>
<protein>
    <recommendedName>
        <fullName evidence="1">Betaine aldehyde dehydrogenase</fullName>
        <shortName evidence="1">BADH</shortName>
        <ecNumber evidence="1">1.2.1.8</ecNumber>
    </recommendedName>
</protein>
<dbReference type="EC" id="1.2.1.8" evidence="1"/>
<dbReference type="EMBL" id="FM209186">
    <property type="protein sequence ID" value="CAW30522.1"/>
    <property type="molecule type" value="Genomic_DNA"/>
</dbReference>
<dbReference type="RefSeq" id="WP_003114436.1">
    <property type="nucleotide sequence ID" value="NC_011770.1"/>
</dbReference>
<dbReference type="SMR" id="B7V5R4"/>
<dbReference type="KEGG" id="pag:PLES_57681"/>
<dbReference type="HOGENOM" id="CLU_005391_0_2_6"/>
<dbReference type="UniPathway" id="UPA00529">
    <property type="reaction ID" value="UER00386"/>
</dbReference>
<dbReference type="GO" id="GO:0008802">
    <property type="term" value="F:betaine-aldehyde dehydrogenase (NAD+) activity"/>
    <property type="evidence" value="ECO:0007669"/>
    <property type="project" value="UniProtKB-UniRule"/>
</dbReference>
<dbReference type="GO" id="GO:0046872">
    <property type="term" value="F:metal ion binding"/>
    <property type="evidence" value="ECO:0007669"/>
    <property type="project" value="UniProtKB-KW"/>
</dbReference>
<dbReference type="GO" id="GO:0019285">
    <property type="term" value="P:glycine betaine biosynthetic process from choline"/>
    <property type="evidence" value="ECO:0007669"/>
    <property type="project" value="UniProtKB-UniRule"/>
</dbReference>
<dbReference type="CDD" id="cd07090">
    <property type="entry name" value="ALDH_F9_TMBADH"/>
    <property type="match status" value="1"/>
</dbReference>
<dbReference type="FunFam" id="3.40.309.10:FF:000014">
    <property type="entry name" value="NAD/NADP-dependent betaine aldehyde dehydrogenase"/>
    <property type="match status" value="1"/>
</dbReference>
<dbReference type="FunFam" id="3.40.605.10:FF:000007">
    <property type="entry name" value="NAD/NADP-dependent betaine aldehyde dehydrogenase"/>
    <property type="match status" value="1"/>
</dbReference>
<dbReference type="Gene3D" id="3.40.605.10">
    <property type="entry name" value="Aldehyde Dehydrogenase, Chain A, domain 1"/>
    <property type="match status" value="1"/>
</dbReference>
<dbReference type="Gene3D" id="3.40.309.10">
    <property type="entry name" value="Aldehyde Dehydrogenase, Chain A, domain 2"/>
    <property type="match status" value="1"/>
</dbReference>
<dbReference type="HAMAP" id="MF_00804">
    <property type="entry name" value="BADH"/>
    <property type="match status" value="1"/>
</dbReference>
<dbReference type="InterPro" id="IPR016161">
    <property type="entry name" value="Ald_DH/histidinol_DH"/>
</dbReference>
<dbReference type="InterPro" id="IPR016163">
    <property type="entry name" value="Ald_DH_C"/>
</dbReference>
<dbReference type="InterPro" id="IPR016160">
    <property type="entry name" value="Ald_DH_CS_CYS"/>
</dbReference>
<dbReference type="InterPro" id="IPR029510">
    <property type="entry name" value="Ald_DH_CS_GLU"/>
</dbReference>
<dbReference type="InterPro" id="IPR016162">
    <property type="entry name" value="Ald_DH_N"/>
</dbReference>
<dbReference type="InterPro" id="IPR015590">
    <property type="entry name" value="Aldehyde_DH_dom"/>
</dbReference>
<dbReference type="InterPro" id="IPR011264">
    <property type="entry name" value="BADH"/>
</dbReference>
<dbReference type="NCBIfam" id="TIGR01804">
    <property type="entry name" value="BADH"/>
    <property type="match status" value="1"/>
</dbReference>
<dbReference type="NCBIfam" id="NF009725">
    <property type="entry name" value="PRK13252.1"/>
    <property type="match status" value="1"/>
</dbReference>
<dbReference type="PANTHER" id="PTHR11699">
    <property type="entry name" value="ALDEHYDE DEHYDROGENASE-RELATED"/>
    <property type="match status" value="1"/>
</dbReference>
<dbReference type="Pfam" id="PF00171">
    <property type="entry name" value="Aldedh"/>
    <property type="match status" value="1"/>
</dbReference>
<dbReference type="SUPFAM" id="SSF53720">
    <property type="entry name" value="ALDH-like"/>
    <property type="match status" value="1"/>
</dbReference>
<dbReference type="PROSITE" id="PS00070">
    <property type="entry name" value="ALDEHYDE_DEHYDR_CYS"/>
    <property type="match status" value="1"/>
</dbReference>
<dbReference type="PROSITE" id="PS00687">
    <property type="entry name" value="ALDEHYDE_DEHYDR_GLU"/>
    <property type="match status" value="1"/>
</dbReference>
<sequence length="490" mass="53332">MARFEEQKLYIGGRYVEASSGATFETINPANGEVLAKVQRASREDVERAVQSAVEGQKVWAAMTAMQRSRILRRAVDILRERNDELAALETLDTGKPLAETRSVDIVTGADVLEYYAGLVPAIEGEQIPLRETSFVYTRREPLGVVAGIGAWNYPVQIALWKSAPALAAGNAMIFKPSEVTPLTALKLAEIYTEAGVPDGVFNVLTGSGREVGQWLTEHPLIEKISFTGGTSTGKKVMASASSSSLKEVTMELGGKSPLIIFPDADLDRAADIAVMANFFSSGQVCTNGTRVFIHRSQQARFEAKVLERVQRIRLGDPQDENTNFGPLVSFPHMESVLGYIESGKAQKARLLCGGERVTDGAFGKGAYVAPTVFTDCRDDMTIVREEIFGPVMSILVYDDEDEAIRRANDTEYGLAAGVVTQDLARAHRAIHRLEAGICWINTWGESPAEMPVGGYKQSGVGRENGLTTLAHYTRIKSVQVELGDYASVF</sequence>
<feature type="chain" id="PRO_1000133955" description="Betaine aldehyde dehydrogenase">
    <location>
        <begin position="1"/>
        <end position="490"/>
    </location>
</feature>
<feature type="active site" description="Charge relay system" evidence="1">
    <location>
        <position position="162"/>
    </location>
</feature>
<feature type="active site" description="Proton acceptor" evidence="1">
    <location>
        <position position="252"/>
    </location>
</feature>
<feature type="active site" description="Nucleophile" evidence="1">
    <location>
        <position position="286"/>
    </location>
</feature>
<feature type="active site" description="Charge relay system" evidence="1">
    <location>
        <position position="464"/>
    </location>
</feature>
<feature type="binding site" evidence="1">
    <location>
        <position position="26"/>
    </location>
    <ligand>
        <name>K(+)</name>
        <dbReference type="ChEBI" id="CHEBI:29103"/>
        <label>1</label>
    </ligand>
</feature>
<feature type="binding site" evidence="1">
    <location>
        <position position="27"/>
    </location>
    <ligand>
        <name>K(+)</name>
        <dbReference type="ChEBI" id="CHEBI:29103"/>
        <label>1</label>
    </ligand>
</feature>
<feature type="binding site" evidence="1">
    <location>
        <position position="93"/>
    </location>
    <ligand>
        <name>K(+)</name>
        <dbReference type="ChEBI" id="CHEBI:29103"/>
        <label>1</label>
    </ligand>
</feature>
<feature type="binding site" evidence="1">
    <location>
        <begin position="150"/>
        <end position="152"/>
    </location>
    <ligand>
        <name>NAD(+)</name>
        <dbReference type="ChEBI" id="CHEBI:57540"/>
    </ligand>
</feature>
<feature type="binding site" evidence="1">
    <location>
        <begin position="176"/>
        <end position="179"/>
    </location>
    <ligand>
        <name>NAD(+)</name>
        <dbReference type="ChEBI" id="CHEBI:57540"/>
    </ligand>
</feature>
<feature type="binding site" evidence="1">
    <location>
        <position position="180"/>
    </location>
    <ligand>
        <name>K(+)</name>
        <dbReference type="ChEBI" id="CHEBI:29103"/>
        <label>1</label>
    </ligand>
</feature>
<feature type="binding site" evidence="1">
    <location>
        <begin position="230"/>
        <end position="233"/>
    </location>
    <ligand>
        <name>NAD(+)</name>
        <dbReference type="ChEBI" id="CHEBI:57540"/>
    </ligand>
</feature>
<feature type="binding site" evidence="1">
    <location>
        <position position="246"/>
    </location>
    <ligand>
        <name>K(+)</name>
        <dbReference type="ChEBI" id="CHEBI:29103"/>
        <label>2</label>
    </ligand>
</feature>
<feature type="binding site" evidence="1">
    <location>
        <position position="254"/>
    </location>
    <ligand>
        <name>NAD(+)</name>
        <dbReference type="ChEBI" id="CHEBI:57540"/>
    </ligand>
</feature>
<feature type="binding site" description="covalent" evidence="1">
    <location>
        <position position="286"/>
    </location>
    <ligand>
        <name>NAD(+)</name>
        <dbReference type="ChEBI" id="CHEBI:57540"/>
    </ligand>
</feature>
<feature type="binding site" evidence="1">
    <location>
        <position position="387"/>
    </location>
    <ligand>
        <name>NAD(+)</name>
        <dbReference type="ChEBI" id="CHEBI:57540"/>
    </ligand>
</feature>
<feature type="binding site" evidence="1">
    <location>
        <position position="457"/>
    </location>
    <ligand>
        <name>K(+)</name>
        <dbReference type="ChEBI" id="CHEBI:29103"/>
        <label>2</label>
    </ligand>
</feature>
<feature type="binding site" evidence="1">
    <location>
        <position position="460"/>
    </location>
    <ligand>
        <name>K(+)</name>
        <dbReference type="ChEBI" id="CHEBI:29103"/>
        <label>2</label>
    </ligand>
</feature>
<feature type="site" description="Seems to be a necessary countercharge to the potassium cations" evidence="1">
    <location>
        <position position="248"/>
    </location>
</feature>
<feature type="modified residue" description="Cysteine sulfenic acid (-SOH)" evidence="1">
    <location>
        <position position="286"/>
    </location>
</feature>
<comment type="function">
    <text evidence="1">Involved in the biosynthesis of the osmoprotectant glycine betaine. Catalyzes the irreversible oxidation of betaine aldehyde to the corresponding acid.</text>
</comment>
<comment type="catalytic activity">
    <reaction evidence="1">
        <text>betaine aldehyde + NAD(+) + H2O = glycine betaine + NADH + 2 H(+)</text>
        <dbReference type="Rhea" id="RHEA:15305"/>
        <dbReference type="ChEBI" id="CHEBI:15377"/>
        <dbReference type="ChEBI" id="CHEBI:15378"/>
        <dbReference type="ChEBI" id="CHEBI:15710"/>
        <dbReference type="ChEBI" id="CHEBI:17750"/>
        <dbReference type="ChEBI" id="CHEBI:57540"/>
        <dbReference type="ChEBI" id="CHEBI:57945"/>
        <dbReference type="EC" id="1.2.1.8"/>
    </reaction>
    <physiologicalReaction direction="left-to-right" evidence="1">
        <dbReference type="Rhea" id="RHEA:15306"/>
    </physiologicalReaction>
</comment>
<comment type="cofactor">
    <cofactor evidence="1">
        <name>K(+)</name>
        <dbReference type="ChEBI" id="CHEBI:29103"/>
    </cofactor>
    <text evidence="1">Binds 2 potassium ions per subunit.</text>
</comment>
<comment type="pathway">
    <text evidence="1">Amine and polyamine biosynthesis; betaine biosynthesis via choline pathway; betaine from betaine aldehyde: step 1/1.</text>
</comment>
<comment type="subunit">
    <text evidence="1">Dimer of dimers.</text>
</comment>
<comment type="similarity">
    <text evidence="1">Belongs to the aldehyde dehydrogenase family.</text>
</comment>
<organism>
    <name type="scientific">Pseudomonas aeruginosa (strain LESB58)</name>
    <dbReference type="NCBI Taxonomy" id="557722"/>
    <lineage>
        <taxon>Bacteria</taxon>
        <taxon>Pseudomonadati</taxon>
        <taxon>Pseudomonadota</taxon>
        <taxon>Gammaproteobacteria</taxon>
        <taxon>Pseudomonadales</taxon>
        <taxon>Pseudomonadaceae</taxon>
        <taxon>Pseudomonas</taxon>
    </lineage>
</organism>
<evidence type="ECO:0000255" key="1">
    <source>
        <dbReference type="HAMAP-Rule" id="MF_00804"/>
    </source>
</evidence>
<name>BETB_PSEA8</name>
<gene>
    <name evidence="1" type="primary">betB</name>
    <name type="ordered locus">PLES_57681</name>
</gene>
<proteinExistence type="inferred from homology"/>
<reference key="1">
    <citation type="journal article" date="2009" name="Genome Res.">
        <title>Newly introduced genomic prophage islands are critical determinants of in vivo competitiveness in the Liverpool epidemic strain of Pseudomonas aeruginosa.</title>
        <authorList>
            <person name="Winstanley C."/>
            <person name="Langille M.G.I."/>
            <person name="Fothergill J.L."/>
            <person name="Kukavica-Ibrulj I."/>
            <person name="Paradis-Bleau C."/>
            <person name="Sanschagrin F."/>
            <person name="Thomson N.R."/>
            <person name="Winsor G.L."/>
            <person name="Quail M.A."/>
            <person name="Lennard N."/>
            <person name="Bignell A."/>
            <person name="Clarke L."/>
            <person name="Seeger K."/>
            <person name="Saunders D."/>
            <person name="Harris D."/>
            <person name="Parkhill J."/>
            <person name="Hancock R.E.W."/>
            <person name="Brinkman F.S.L."/>
            <person name="Levesque R.C."/>
        </authorList>
    </citation>
    <scope>NUCLEOTIDE SEQUENCE [LARGE SCALE GENOMIC DNA]</scope>
    <source>
        <strain>LESB58</strain>
    </source>
</reference>